<name>SYR_PSYIN</name>
<organism>
    <name type="scientific">Psychromonas ingrahamii (strain DSM 17664 / CCUG 51855 / 37)</name>
    <dbReference type="NCBI Taxonomy" id="357804"/>
    <lineage>
        <taxon>Bacteria</taxon>
        <taxon>Pseudomonadati</taxon>
        <taxon>Pseudomonadota</taxon>
        <taxon>Gammaproteobacteria</taxon>
        <taxon>Alteromonadales</taxon>
        <taxon>Psychromonadaceae</taxon>
        <taxon>Psychromonas</taxon>
    </lineage>
</organism>
<reference key="1">
    <citation type="journal article" date="2008" name="BMC Genomics">
        <title>Genomics of an extreme psychrophile, Psychromonas ingrahamii.</title>
        <authorList>
            <person name="Riley M."/>
            <person name="Staley J.T."/>
            <person name="Danchin A."/>
            <person name="Wang T.Z."/>
            <person name="Brettin T.S."/>
            <person name="Hauser L.J."/>
            <person name="Land M.L."/>
            <person name="Thompson L.S."/>
        </authorList>
    </citation>
    <scope>NUCLEOTIDE SEQUENCE [LARGE SCALE GENOMIC DNA]</scope>
    <source>
        <strain>DSM 17664 / CCUG 51855 / 37</strain>
    </source>
</reference>
<dbReference type="EC" id="6.1.1.19" evidence="1"/>
<dbReference type="EMBL" id="CP000510">
    <property type="protein sequence ID" value="ABM01881.1"/>
    <property type="molecule type" value="Genomic_DNA"/>
</dbReference>
<dbReference type="RefSeq" id="WP_011768440.1">
    <property type="nucleotide sequence ID" value="NC_008709.1"/>
</dbReference>
<dbReference type="SMR" id="A1SQW6"/>
<dbReference type="STRING" id="357804.Ping_0006"/>
<dbReference type="KEGG" id="pin:Ping_0006"/>
<dbReference type="eggNOG" id="COG0018">
    <property type="taxonomic scope" value="Bacteria"/>
</dbReference>
<dbReference type="HOGENOM" id="CLU_006406_5_1_6"/>
<dbReference type="OrthoDB" id="9803211at2"/>
<dbReference type="Proteomes" id="UP000000639">
    <property type="component" value="Chromosome"/>
</dbReference>
<dbReference type="GO" id="GO:0005737">
    <property type="term" value="C:cytoplasm"/>
    <property type="evidence" value="ECO:0007669"/>
    <property type="project" value="UniProtKB-SubCell"/>
</dbReference>
<dbReference type="GO" id="GO:0004814">
    <property type="term" value="F:arginine-tRNA ligase activity"/>
    <property type="evidence" value="ECO:0007669"/>
    <property type="project" value="UniProtKB-UniRule"/>
</dbReference>
<dbReference type="GO" id="GO:0005524">
    <property type="term" value="F:ATP binding"/>
    <property type="evidence" value="ECO:0007669"/>
    <property type="project" value="UniProtKB-UniRule"/>
</dbReference>
<dbReference type="GO" id="GO:0006420">
    <property type="term" value="P:arginyl-tRNA aminoacylation"/>
    <property type="evidence" value="ECO:0007669"/>
    <property type="project" value="UniProtKB-UniRule"/>
</dbReference>
<dbReference type="CDD" id="cd07956">
    <property type="entry name" value="Anticodon_Ia_Arg"/>
    <property type="match status" value="1"/>
</dbReference>
<dbReference type="CDD" id="cd00671">
    <property type="entry name" value="ArgRS_core"/>
    <property type="match status" value="1"/>
</dbReference>
<dbReference type="FunFam" id="1.10.730.10:FF:000001">
    <property type="entry name" value="Arginine--tRNA ligase"/>
    <property type="match status" value="1"/>
</dbReference>
<dbReference type="FunFam" id="3.30.1360.70:FF:000003">
    <property type="entry name" value="Arginine--tRNA ligase"/>
    <property type="match status" value="1"/>
</dbReference>
<dbReference type="FunFam" id="3.40.50.620:FF:000030">
    <property type="entry name" value="Arginine--tRNA ligase"/>
    <property type="match status" value="1"/>
</dbReference>
<dbReference type="Gene3D" id="3.30.1360.70">
    <property type="entry name" value="Arginyl tRNA synthetase N-terminal domain"/>
    <property type="match status" value="1"/>
</dbReference>
<dbReference type="Gene3D" id="3.40.50.620">
    <property type="entry name" value="HUPs"/>
    <property type="match status" value="1"/>
</dbReference>
<dbReference type="Gene3D" id="1.10.730.10">
    <property type="entry name" value="Isoleucyl-tRNA Synthetase, Domain 1"/>
    <property type="match status" value="1"/>
</dbReference>
<dbReference type="HAMAP" id="MF_00123">
    <property type="entry name" value="Arg_tRNA_synth"/>
    <property type="match status" value="1"/>
</dbReference>
<dbReference type="InterPro" id="IPR001412">
    <property type="entry name" value="aa-tRNA-synth_I_CS"/>
</dbReference>
<dbReference type="InterPro" id="IPR001278">
    <property type="entry name" value="Arg-tRNA-ligase"/>
</dbReference>
<dbReference type="InterPro" id="IPR005148">
    <property type="entry name" value="Arg-tRNA-synth_N"/>
</dbReference>
<dbReference type="InterPro" id="IPR036695">
    <property type="entry name" value="Arg-tRNA-synth_N_sf"/>
</dbReference>
<dbReference type="InterPro" id="IPR035684">
    <property type="entry name" value="ArgRS_core"/>
</dbReference>
<dbReference type="InterPro" id="IPR008909">
    <property type="entry name" value="DALR_anticod-bd"/>
</dbReference>
<dbReference type="InterPro" id="IPR014729">
    <property type="entry name" value="Rossmann-like_a/b/a_fold"/>
</dbReference>
<dbReference type="InterPro" id="IPR009080">
    <property type="entry name" value="tRNAsynth_Ia_anticodon-bd"/>
</dbReference>
<dbReference type="NCBIfam" id="TIGR00456">
    <property type="entry name" value="argS"/>
    <property type="match status" value="1"/>
</dbReference>
<dbReference type="PANTHER" id="PTHR11956:SF5">
    <property type="entry name" value="ARGININE--TRNA LIGASE, CYTOPLASMIC"/>
    <property type="match status" value="1"/>
</dbReference>
<dbReference type="PANTHER" id="PTHR11956">
    <property type="entry name" value="ARGINYL-TRNA SYNTHETASE"/>
    <property type="match status" value="1"/>
</dbReference>
<dbReference type="Pfam" id="PF03485">
    <property type="entry name" value="Arg_tRNA_synt_N"/>
    <property type="match status" value="1"/>
</dbReference>
<dbReference type="Pfam" id="PF05746">
    <property type="entry name" value="DALR_1"/>
    <property type="match status" value="1"/>
</dbReference>
<dbReference type="Pfam" id="PF00750">
    <property type="entry name" value="tRNA-synt_1d"/>
    <property type="match status" value="1"/>
</dbReference>
<dbReference type="PRINTS" id="PR01038">
    <property type="entry name" value="TRNASYNTHARG"/>
</dbReference>
<dbReference type="SMART" id="SM01016">
    <property type="entry name" value="Arg_tRNA_synt_N"/>
    <property type="match status" value="1"/>
</dbReference>
<dbReference type="SMART" id="SM00836">
    <property type="entry name" value="DALR_1"/>
    <property type="match status" value="1"/>
</dbReference>
<dbReference type="SUPFAM" id="SSF47323">
    <property type="entry name" value="Anticodon-binding domain of a subclass of class I aminoacyl-tRNA synthetases"/>
    <property type="match status" value="1"/>
</dbReference>
<dbReference type="SUPFAM" id="SSF55190">
    <property type="entry name" value="Arginyl-tRNA synthetase (ArgRS), N-terminal 'additional' domain"/>
    <property type="match status" value="1"/>
</dbReference>
<dbReference type="SUPFAM" id="SSF52374">
    <property type="entry name" value="Nucleotidylyl transferase"/>
    <property type="match status" value="1"/>
</dbReference>
<dbReference type="PROSITE" id="PS00178">
    <property type="entry name" value="AA_TRNA_LIGASE_I"/>
    <property type="match status" value="1"/>
</dbReference>
<evidence type="ECO:0000255" key="1">
    <source>
        <dbReference type="HAMAP-Rule" id="MF_00123"/>
    </source>
</evidence>
<feature type="chain" id="PRO_1000018096" description="Arginine--tRNA ligase">
    <location>
        <begin position="1"/>
        <end position="582"/>
    </location>
</feature>
<feature type="short sequence motif" description="'HIGH' region">
    <location>
        <begin position="127"/>
        <end position="137"/>
    </location>
</feature>
<protein>
    <recommendedName>
        <fullName evidence="1">Arginine--tRNA ligase</fullName>
        <ecNumber evidence="1">6.1.1.19</ecNumber>
    </recommendedName>
    <alternativeName>
        <fullName evidence="1">Arginyl-tRNA synthetase</fullName>
        <shortName evidence="1">ArgRS</shortName>
    </alternativeName>
</protein>
<proteinExistence type="inferred from homology"/>
<gene>
    <name evidence="1" type="primary">argS</name>
    <name type="ordered locus">Ping_0006</name>
</gene>
<accession>A1SQW6</accession>
<sequence>MKVHIQQLLEQAIVCLIKQEIIPADIQPRINIDRTKDKSHGDYANNLALMLAKPAKQNPRHLAELIIANIPESTLVIKMEIAGPGFINFFINPNFLEKQIDGAYLDKRLNVQIEANPQTIVIDYSSPNLAKEMHVGHLRSSIIGDAVARTLEFKGNNVVRQNHVGDWGTQFGMLLAYMEELRAKGEPIENNLANLEIFYRAAKGRFDESEDFATRARHLVVKLQGGNKDCLKLWAKFNETSLSHCQETYQRLGVSLTRADVRGESSYNDQLAVVVEDLDKQGLLQQSQGAKCVFLDNFKNKEGDPLPVIIQKKDGGFLYATSDLAAMRYRQNELNADRILYFVDARQGLHFQQVFEVARSAGFVNEKTSLEHMPFGTVMGEDGRPFKTRSGAVAKLADLLTEAEVRAYELVKEKNKEMSEPELRHIASVVGISSVKYADLSKNRTSDYTFSFDSMLSFEGNTAPYLLYAYTRVVSIFNKAGIEMGSVTAAVSLTQEKEIDLANKLIQFNDIIDQVAKQGMPHFLCSYLFELAGLFSSFYEACPILIAETETQKQSRLKLAGLTAKTLKQGLSLLGINTLERM</sequence>
<comment type="catalytic activity">
    <reaction evidence="1">
        <text>tRNA(Arg) + L-arginine + ATP = L-arginyl-tRNA(Arg) + AMP + diphosphate</text>
        <dbReference type="Rhea" id="RHEA:20301"/>
        <dbReference type="Rhea" id="RHEA-COMP:9658"/>
        <dbReference type="Rhea" id="RHEA-COMP:9673"/>
        <dbReference type="ChEBI" id="CHEBI:30616"/>
        <dbReference type="ChEBI" id="CHEBI:32682"/>
        <dbReference type="ChEBI" id="CHEBI:33019"/>
        <dbReference type="ChEBI" id="CHEBI:78442"/>
        <dbReference type="ChEBI" id="CHEBI:78513"/>
        <dbReference type="ChEBI" id="CHEBI:456215"/>
        <dbReference type="EC" id="6.1.1.19"/>
    </reaction>
</comment>
<comment type="subunit">
    <text evidence="1">Monomer.</text>
</comment>
<comment type="subcellular location">
    <subcellularLocation>
        <location evidence="1">Cytoplasm</location>
    </subcellularLocation>
</comment>
<comment type="similarity">
    <text evidence="1">Belongs to the class-I aminoacyl-tRNA synthetase family.</text>
</comment>
<keyword id="KW-0030">Aminoacyl-tRNA synthetase</keyword>
<keyword id="KW-0067">ATP-binding</keyword>
<keyword id="KW-0963">Cytoplasm</keyword>
<keyword id="KW-0436">Ligase</keyword>
<keyword id="KW-0547">Nucleotide-binding</keyword>
<keyword id="KW-0648">Protein biosynthesis</keyword>
<keyword id="KW-1185">Reference proteome</keyword>